<comment type="function">
    <text evidence="4">Receptor for thymic stromal lymphopoietin (TSLP). Forms a functional complex with TSLP and IL7R which is capable of stimulating cell proliferation through activation of STAT3 and STAT5. Also activates JAK2. Implicated in the development of the hematopoietic system.</text>
</comment>
<comment type="subunit">
    <text evidence="5">The TSLP receptor is a heterodimer of CRLF2 and IL7R. Binding of TSLP to CRLF2/TSLPR is a mechanistic prerequisite for recruitment of IL7R to the high-affinity ternary complex.</text>
</comment>
<comment type="interaction">
    <interactant intactId="EBI-15887886">
        <id>Q8CII9</id>
    </interactant>
    <interactant intactId="EBI-16096402">
        <id>Q9JIE6</id>
        <label>Tslp</label>
    </interactant>
    <organismsDiffer>false</organismsDiffer>
    <experiments>9</experiments>
</comment>
<comment type="subcellular location">
    <molecule>Isoform 1</molecule>
    <subcellularLocation>
        <location>Cell membrane</location>
        <topology>Single-pass type I membrane protein</topology>
    </subcellularLocation>
</comment>
<comment type="subcellular location">
    <molecule>Isoform 3</molecule>
    <subcellularLocation>
        <location>Cell membrane</location>
        <topology>Single-pass type I membrane protein</topology>
    </subcellularLocation>
</comment>
<comment type="subcellular location">
    <molecule>Isoform 2</molecule>
    <subcellularLocation>
        <location>Secreted</location>
    </subcellularLocation>
</comment>
<comment type="alternative products">
    <event type="alternative splicing"/>
    <isoform>
        <id>Q8CII9-1</id>
        <name>1</name>
        <sequence type="displayed"/>
    </isoform>
    <isoform>
        <id>Q8CII9-2</id>
        <name>2</name>
        <name>Soluble CRLM-2</name>
        <sequence type="described" ref="VSP_008788 VSP_008789"/>
    </isoform>
    <isoform>
        <id>Q8CII9-3</id>
        <name>3</name>
        <sequence type="described" ref="VSP_008790"/>
    </isoform>
    <isoform>
        <id>Q8CII9-4</id>
        <name>4</name>
        <sequence type="described" ref="VSP_018990 VSP_018991"/>
    </isoform>
    <text>Additional isoforms seem to exist.</text>
</comment>
<comment type="tissue specificity">
    <text>High level of expression in liver, lung and testis. Also expressed in heart, brain, spleen, thymus and bone marrow. Highly expressed in progenitors and myeloid cells. Isoform 2 is expressed in primary hemotopoietic cells.</text>
</comment>
<comment type="induction">
    <text>Up-regulated in the myeloid 32D cell line by granulocyte colony-stimulating factor (G-CSF).</text>
</comment>
<comment type="domain">
    <text>The WSXWS motif appears to be necessary for proper protein folding and thereby efficient intracellular transport and cell-surface receptor binding.</text>
</comment>
<comment type="domain">
    <text>The box 1 motif is required for JAK interaction and/or activation.</text>
</comment>
<comment type="similarity">
    <text evidence="9">Belongs to the type I cytokine receptor family. Type 5 subfamily.</text>
</comment>
<accession>Q8CII9</accession>
<accession>Q9CRJ6</accession>
<accession>Q9JIE7</accession>
<accession>Q9JIQ7</accession>
<accession>Q9JJH8</accession>
<accession>Q9JMD5</accession>
<feature type="signal peptide" evidence="1">
    <location>
        <begin position="1"/>
        <end position="19"/>
    </location>
</feature>
<feature type="chain" id="PRO_0000011042" description="Cytokine receptor-like factor 2">
    <location>
        <begin position="20"/>
        <end position="359"/>
    </location>
</feature>
<feature type="topological domain" description="Extracellular" evidence="1">
    <location>
        <begin position="20"/>
        <end position="232"/>
    </location>
</feature>
<feature type="transmembrane region" description="Helical" evidence="1">
    <location>
        <begin position="233"/>
        <end position="253"/>
    </location>
</feature>
<feature type="topological domain" description="Cytoplasmic" evidence="1">
    <location>
        <begin position="254"/>
        <end position="359"/>
    </location>
</feature>
<feature type="domain" description="Fibronectin type-III" evidence="2">
    <location>
        <begin position="119"/>
        <end position="213"/>
    </location>
</feature>
<feature type="region of interest" description="Disordered" evidence="3">
    <location>
        <begin position="312"/>
        <end position="336"/>
    </location>
</feature>
<feature type="short sequence motif" description="WSXWS motif">
    <location>
        <begin position="201"/>
        <end position="205"/>
    </location>
</feature>
<feature type="short sequence motif" description="Box 1 motif">
    <location>
        <begin position="262"/>
        <end position="270"/>
    </location>
</feature>
<feature type="glycosylation site" description="N-linked (GlcNAc...) asparagine" evidence="5">
    <location>
        <position position="53"/>
    </location>
</feature>
<feature type="glycosylation site" description="N-linked (GlcNAc...) asparagine" evidence="1">
    <location>
        <position position="122"/>
    </location>
</feature>
<feature type="disulfide bond" evidence="5">
    <location>
        <begin position="68"/>
        <end position="82"/>
    </location>
</feature>
<feature type="disulfide bond" evidence="5">
    <location>
        <begin position="168"/>
        <end position="169"/>
    </location>
</feature>
<feature type="disulfide bond" evidence="5">
    <location>
        <begin position="181"/>
        <end position="219"/>
    </location>
</feature>
<feature type="splice variant" id="VSP_018990" description="In isoform 4." evidence="8">
    <location>
        <begin position="1"/>
        <end position="233"/>
    </location>
</feature>
<feature type="splice variant" id="VSP_008788" description="In isoform 2." evidence="6">
    <original>A</original>
    <variation>G</variation>
    <location>
        <position position="217"/>
    </location>
</feature>
<feature type="splice variant" id="VSP_008790" description="In isoform 3." evidence="7">
    <original>A</original>
    <variation>AGDPCAAHLPPL</variation>
    <location>
        <position position="217"/>
    </location>
</feature>
<feature type="splice variant" id="VSP_008789" description="In isoform 2." evidence="6">
    <location>
        <begin position="218"/>
        <end position="359"/>
    </location>
</feature>
<feature type="splice variant" id="VSP_018991" description="In isoform 4." evidence="8">
    <original>L</original>
    <variation>M</variation>
    <location>
        <position position="234"/>
    </location>
</feature>
<feature type="sequence conflict" description="In Ref. 2; BAA92159." evidence="9" ref="2">
    <original>A</original>
    <variation>T</variation>
    <location>
        <position position="15"/>
    </location>
</feature>
<feature type="sequence conflict" description="In Ref. 4; AAF82189 and 6; AAH23788." evidence="9" ref="4 6">
    <original>G</original>
    <variation>S</variation>
    <location>
        <position position="51"/>
    </location>
</feature>
<feature type="sequence conflict" description="In Ref. 3; AAF81676." evidence="9" ref="3">
    <original>A</original>
    <variation>G</variation>
    <location>
        <position position="87"/>
    </location>
</feature>
<feature type="sequence conflict" description="In Ref. 1; BAA92684 and 3; AAF81676." evidence="9" ref="1 3">
    <original>A</original>
    <variation>V</variation>
    <location>
        <position position="179"/>
    </location>
</feature>
<feature type="sequence conflict" description="In Ref. 1; BAA92684, 3; AAF81676 and 5; BAB26827." evidence="9" ref="1 3 5">
    <original>P</original>
    <variation>T</variation>
    <location>
        <position position="309"/>
    </location>
</feature>
<feature type="sequence conflict" description="In Ref. 5; BAB26827." evidence="9" ref="5">
    <original>G</original>
    <variation>R</variation>
    <location>
        <position position="355"/>
    </location>
</feature>
<feature type="strand" evidence="10">
    <location>
        <begin position="30"/>
        <end position="34"/>
    </location>
</feature>
<feature type="turn" evidence="10">
    <location>
        <begin position="35"/>
        <end position="37"/>
    </location>
</feature>
<feature type="strand" evidence="10">
    <location>
        <begin position="38"/>
        <end position="42"/>
    </location>
</feature>
<feature type="strand" evidence="10">
    <location>
        <begin position="55"/>
        <end position="60"/>
    </location>
</feature>
<feature type="strand" evidence="10">
    <location>
        <begin position="69"/>
        <end position="73"/>
    </location>
</feature>
<feature type="strand" evidence="10">
    <location>
        <begin position="79"/>
        <end position="85"/>
    </location>
</feature>
<feature type="strand" evidence="10">
    <location>
        <begin position="88"/>
        <end position="90"/>
    </location>
</feature>
<feature type="strand" evidence="10">
    <location>
        <begin position="92"/>
        <end position="97"/>
    </location>
</feature>
<feature type="strand" evidence="10">
    <location>
        <begin position="103"/>
        <end position="109"/>
    </location>
</feature>
<feature type="helix" evidence="10">
    <location>
        <begin position="111"/>
        <end position="114"/>
    </location>
</feature>
<feature type="strand" evidence="10">
    <location>
        <begin position="124"/>
        <end position="127"/>
    </location>
</feature>
<feature type="strand" evidence="10">
    <location>
        <begin position="133"/>
        <end position="136"/>
    </location>
</feature>
<feature type="strand" evidence="10">
    <location>
        <begin position="141"/>
        <end position="143"/>
    </location>
</feature>
<feature type="strand" evidence="10">
    <location>
        <begin position="145"/>
        <end position="153"/>
    </location>
</feature>
<feature type="strand" evidence="10">
    <location>
        <begin position="162"/>
        <end position="167"/>
    </location>
</feature>
<feature type="strand" evidence="10">
    <location>
        <begin position="170"/>
        <end position="173"/>
    </location>
</feature>
<feature type="strand" evidence="10">
    <location>
        <begin position="180"/>
        <end position="190"/>
    </location>
</feature>
<feature type="helix" evidence="10">
    <location>
        <begin position="192"/>
        <end position="195"/>
    </location>
</feature>
<feature type="strand" evidence="10">
    <location>
        <begin position="208"/>
        <end position="214"/>
    </location>
</feature>
<feature type="helix" evidence="10">
    <location>
        <begin position="216"/>
        <end position="218"/>
    </location>
</feature>
<name>CRLF2_MOUSE</name>
<proteinExistence type="evidence at protein level"/>
<evidence type="ECO:0000255" key="1"/>
<evidence type="ECO:0000255" key="2">
    <source>
        <dbReference type="PROSITE-ProRule" id="PRU00316"/>
    </source>
</evidence>
<evidence type="ECO:0000256" key="3">
    <source>
        <dbReference type="SAM" id="MobiDB-lite"/>
    </source>
</evidence>
<evidence type="ECO:0000269" key="4">
    <source>
    </source>
</evidence>
<evidence type="ECO:0000269" key="5">
    <source>
    </source>
</evidence>
<evidence type="ECO:0000303" key="6">
    <source>
    </source>
</evidence>
<evidence type="ECO:0000303" key="7">
    <source>
    </source>
</evidence>
<evidence type="ECO:0000303" key="8">
    <source>
    </source>
</evidence>
<evidence type="ECO:0000305" key="9"/>
<evidence type="ECO:0007829" key="10">
    <source>
        <dbReference type="PDB" id="4NN5"/>
    </source>
</evidence>
<keyword id="KW-0002">3D-structure</keyword>
<keyword id="KW-0025">Alternative splicing</keyword>
<keyword id="KW-1003">Cell membrane</keyword>
<keyword id="KW-1015">Disulfide bond</keyword>
<keyword id="KW-0325">Glycoprotein</keyword>
<keyword id="KW-0472">Membrane</keyword>
<keyword id="KW-0675">Receptor</keyword>
<keyword id="KW-1185">Reference proteome</keyword>
<keyword id="KW-0964">Secreted</keyword>
<keyword id="KW-0732">Signal</keyword>
<keyword id="KW-0812">Transmembrane</keyword>
<keyword id="KW-1133">Transmembrane helix</keyword>
<sequence>MAWALAVILLPRLLAAAAAAAAVTSRGDVTVVCHDLETVEVTWGSGPDHHGANLSLEFRYGTGALQPCPRYFLSGAGVTSGCILPAARAGLLELALRDGGGAMVFKARQRASAWLKPRPPWNVTLLWTPDGDVTVSWPAHSYLGLDYEVQHRESNDDEDAWQTTSGPCCDLTVGGLDPARCYDFRVRASPRAAHYGLEAQPSEWTAVTRLSGAASAASCTASPAPSPALAPPLLPLGCGLAALLTLSLLLAALRLRRVKDALLPCVPDPSGSFPGLFEKHHGNFQAWIADAQATAPPARTEEEDDLIHPKAKRVEPEDGTSLCTVPRPPSFEPRGPGGGAMVSVGGATFMVGDSGYMTL</sequence>
<gene>
    <name type="primary">Crlf2</name>
    <name type="synonym">Crlm2</name>
    <name type="synonym">Tpte2</name>
    <name type="synonym">Tslpr</name>
</gene>
<reference key="1">
    <citation type="journal article" date="2000" name="Biochem. Biophys. Res. Commun.">
        <title>Molecular cloning and characterization of CRLM-2, a novel type I cytokine receptor preferentially expressed in hematopoietic cells.</title>
        <authorList>
            <person name="Hiroyama T."/>
            <person name="Iwama A."/>
            <person name="Morita Y."/>
            <person name="Nakamura Y."/>
            <person name="Shibuya A."/>
            <person name="Nakauchi H."/>
        </authorList>
    </citation>
    <scope>NUCLEOTIDE SEQUENCE [MRNA] (ISOFORMS 1 AND 2)</scope>
    <source>
        <tissue>Embryo</tissue>
    </source>
</reference>
<reference key="2">
    <citation type="journal article" date="2000" name="Blood">
        <title>Molecular cloning of a novel type I cytokine receptor similar to the common gamma chain.</title>
        <authorList>
            <person name="Fujio K."/>
            <person name="Nosaka T."/>
            <person name="Kojima T."/>
            <person name="Kawashima T."/>
            <person name="Yahata T."/>
            <person name="Copeland N.G."/>
            <person name="Gilbert D.J."/>
            <person name="Jenkins N.A."/>
            <person name="Yamamoto K."/>
            <person name="Nishimura T."/>
            <person name="Kitamura T."/>
        </authorList>
    </citation>
    <scope>NUCLEOTIDE SEQUENCE [MRNA] (ISOFORM 1)</scope>
    <scope>ALTERNATIVE SPLICING</scope>
    <source>
        <tissue>Lymphocyte</tissue>
    </source>
</reference>
<reference key="3">
    <citation type="journal article" date="2000" name="J. Exp. Med.">
        <title>Cloning of the murine thymic stromal lymphopoietin (TSLP) receptor. Formation Of a functional heteromeric complex requires interleukin 7 receptor.</title>
        <authorList>
            <person name="Park L.S."/>
            <person name="Martin U."/>
            <person name="Garka K."/>
            <person name="Gliniak B."/>
            <person name="Di Santo J.P."/>
            <person name="Muller W."/>
            <person name="Largaespada D.A."/>
            <person name="Copeland N.G."/>
            <person name="Jenkins N.A."/>
            <person name="Farr A.G."/>
            <person name="Ziegler S.F."/>
            <person name="Morrissey P.J."/>
            <person name="Paxton R."/>
            <person name="Sims J.E."/>
        </authorList>
    </citation>
    <scope>NUCLEOTIDE SEQUENCE [MRNA] (ISOFORM 1)</scope>
    <scope>FUNCTION AS A RECEPTOR FOR TSLP</scope>
    <source>
        <strain>C57BL/6J</strain>
        <tissue>Lymphocyte</tissue>
    </source>
</reference>
<reference key="4">
    <citation type="journal article" date="2000" name="Nat. Immunol.">
        <title>Cloning of a receptor subunit required for signaling by thymic stromal lymphopoietin.</title>
        <authorList>
            <person name="Pandey A."/>
            <person name="Ozaki K."/>
            <person name="Baumann H."/>
            <person name="Levin S.D."/>
            <person name="Puel A."/>
            <person name="Farr A.G."/>
            <person name="Ziegler S.F."/>
            <person name="Leonard W.J."/>
            <person name="Lodish H.F."/>
        </authorList>
    </citation>
    <scope>NUCLEOTIDE SEQUENCE [MRNA] (ISOFORM 3)</scope>
</reference>
<reference key="5">
    <citation type="journal article" date="2005" name="Science">
        <title>The transcriptional landscape of the mammalian genome.</title>
        <authorList>
            <person name="Carninci P."/>
            <person name="Kasukawa T."/>
            <person name="Katayama S."/>
            <person name="Gough J."/>
            <person name="Frith M.C."/>
            <person name="Maeda N."/>
            <person name="Oyama R."/>
            <person name="Ravasi T."/>
            <person name="Lenhard B."/>
            <person name="Wells C."/>
            <person name="Kodzius R."/>
            <person name="Shimokawa K."/>
            <person name="Bajic V.B."/>
            <person name="Brenner S.E."/>
            <person name="Batalov S."/>
            <person name="Forrest A.R."/>
            <person name="Zavolan M."/>
            <person name="Davis M.J."/>
            <person name="Wilming L.G."/>
            <person name="Aidinis V."/>
            <person name="Allen J.E."/>
            <person name="Ambesi-Impiombato A."/>
            <person name="Apweiler R."/>
            <person name="Aturaliya R.N."/>
            <person name="Bailey T.L."/>
            <person name="Bansal M."/>
            <person name="Baxter L."/>
            <person name="Beisel K.W."/>
            <person name="Bersano T."/>
            <person name="Bono H."/>
            <person name="Chalk A.M."/>
            <person name="Chiu K.P."/>
            <person name="Choudhary V."/>
            <person name="Christoffels A."/>
            <person name="Clutterbuck D.R."/>
            <person name="Crowe M.L."/>
            <person name="Dalla E."/>
            <person name="Dalrymple B.P."/>
            <person name="de Bono B."/>
            <person name="Della Gatta G."/>
            <person name="di Bernardo D."/>
            <person name="Down T."/>
            <person name="Engstrom P."/>
            <person name="Fagiolini M."/>
            <person name="Faulkner G."/>
            <person name="Fletcher C.F."/>
            <person name="Fukushima T."/>
            <person name="Furuno M."/>
            <person name="Futaki S."/>
            <person name="Gariboldi M."/>
            <person name="Georgii-Hemming P."/>
            <person name="Gingeras T.R."/>
            <person name="Gojobori T."/>
            <person name="Green R.E."/>
            <person name="Gustincich S."/>
            <person name="Harbers M."/>
            <person name="Hayashi Y."/>
            <person name="Hensch T.K."/>
            <person name="Hirokawa N."/>
            <person name="Hill D."/>
            <person name="Huminiecki L."/>
            <person name="Iacono M."/>
            <person name="Ikeo K."/>
            <person name="Iwama A."/>
            <person name="Ishikawa T."/>
            <person name="Jakt M."/>
            <person name="Kanapin A."/>
            <person name="Katoh M."/>
            <person name="Kawasawa Y."/>
            <person name="Kelso J."/>
            <person name="Kitamura H."/>
            <person name="Kitano H."/>
            <person name="Kollias G."/>
            <person name="Krishnan S.P."/>
            <person name="Kruger A."/>
            <person name="Kummerfeld S.K."/>
            <person name="Kurochkin I.V."/>
            <person name="Lareau L.F."/>
            <person name="Lazarevic D."/>
            <person name="Lipovich L."/>
            <person name="Liu J."/>
            <person name="Liuni S."/>
            <person name="McWilliam S."/>
            <person name="Madan Babu M."/>
            <person name="Madera M."/>
            <person name="Marchionni L."/>
            <person name="Matsuda H."/>
            <person name="Matsuzawa S."/>
            <person name="Miki H."/>
            <person name="Mignone F."/>
            <person name="Miyake S."/>
            <person name="Morris K."/>
            <person name="Mottagui-Tabar S."/>
            <person name="Mulder N."/>
            <person name="Nakano N."/>
            <person name="Nakauchi H."/>
            <person name="Ng P."/>
            <person name="Nilsson R."/>
            <person name="Nishiguchi S."/>
            <person name="Nishikawa S."/>
            <person name="Nori F."/>
            <person name="Ohara O."/>
            <person name="Okazaki Y."/>
            <person name="Orlando V."/>
            <person name="Pang K.C."/>
            <person name="Pavan W.J."/>
            <person name="Pavesi G."/>
            <person name="Pesole G."/>
            <person name="Petrovsky N."/>
            <person name="Piazza S."/>
            <person name="Reed J."/>
            <person name="Reid J.F."/>
            <person name="Ring B.Z."/>
            <person name="Ringwald M."/>
            <person name="Rost B."/>
            <person name="Ruan Y."/>
            <person name="Salzberg S.L."/>
            <person name="Sandelin A."/>
            <person name="Schneider C."/>
            <person name="Schoenbach C."/>
            <person name="Sekiguchi K."/>
            <person name="Semple C.A."/>
            <person name="Seno S."/>
            <person name="Sessa L."/>
            <person name="Sheng Y."/>
            <person name="Shibata Y."/>
            <person name="Shimada H."/>
            <person name="Shimada K."/>
            <person name="Silva D."/>
            <person name="Sinclair B."/>
            <person name="Sperling S."/>
            <person name="Stupka E."/>
            <person name="Sugiura K."/>
            <person name="Sultana R."/>
            <person name="Takenaka Y."/>
            <person name="Taki K."/>
            <person name="Tammoja K."/>
            <person name="Tan S.L."/>
            <person name="Tang S."/>
            <person name="Taylor M.S."/>
            <person name="Tegner J."/>
            <person name="Teichmann S.A."/>
            <person name="Ueda H.R."/>
            <person name="van Nimwegen E."/>
            <person name="Verardo R."/>
            <person name="Wei C.L."/>
            <person name="Yagi K."/>
            <person name="Yamanishi H."/>
            <person name="Zabarovsky E."/>
            <person name="Zhu S."/>
            <person name="Zimmer A."/>
            <person name="Hide W."/>
            <person name="Bult C."/>
            <person name="Grimmond S.M."/>
            <person name="Teasdale R.D."/>
            <person name="Liu E.T."/>
            <person name="Brusic V."/>
            <person name="Quackenbush J."/>
            <person name="Wahlestedt C."/>
            <person name="Mattick J.S."/>
            <person name="Hume D.A."/>
            <person name="Kai C."/>
            <person name="Sasaki D."/>
            <person name="Tomaru Y."/>
            <person name="Fukuda S."/>
            <person name="Kanamori-Katayama M."/>
            <person name="Suzuki M."/>
            <person name="Aoki J."/>
            <person name="Arakawa T."/>
            <person name="Iida J."/>
            <person name="Imamura K."/>
            <person name="Itoh M."/>
            <person name="Kato T."/>
            <person name="Kawaji H."/>
            <person name="Kawagashira N."/>
            <person name="Kawashima T."/>
            <person name="Kojima M."/>
            <person name="Kondo S."/>
            <person name="Konno H."/>
            <person name="Nakano K."/>
            <person name="Ninomiya N."/>
            <person name="Nishio T."/>
            <person name="Okada M."/>
            <person name="Plessy C."/>
            <person name="Shibata K."/>
            <person name="Shiraki T."/>
            <person name="Suzuki S."/>
            <person name="Tagami M."/>
            <person name="Waki K."/>
            <person name="Watahiki A."/>
            <person name="Okamura-Oho Y."/>
            <person name="Suzuki H."/>
            <person name="Kawai J."/>
            <person name="Hayashizaki Y."/>
        </authorList>
    </citation>
    <scope>NUCLEOTIDE SEQUENCE [LARGE SCALE MRNA] (ISOFORM 4)</scope>
    <source>
        <strain>C57BL/6J</strain>
        <tissue>Embryonic stem cell</tissue>
    </source>
</reference>
<reference key="6">
    <citation type="journal article" date="2004" name="Genome Res.">
        <title>The status, quality, and expansion of the NIH full-length cDNA project: the Mammalian Gene Collection (MGC).</title>
        <authorList>
            <consortium name="The MGC Project Team"/>
        </authorList>
    </citation>
    <scope>NUCLEOTIDE SEQUENCE [LARGE SCALE MRNA] (ISOFORM 1)</scope>
    <source>
        <strain>FVB/N</strain>
        <tissue>Mammary gland</tissue>
    </source>
</reference>
<reference key="7">
    <citation type="journal article" date="2014" name="Nat. Struct. Mol. Biol.">
        <title>Structural basis of the proinflammatory signaling complex mediated by TSLP.</title>
        <authorList>
            <person name="Verstraete K."/>
            <person name="van Schie L."/>
            <person name="Vyncke L."/>
            <person name="Bloch Y."/>
            <person name="Tavernier J."/>
            <person name="Pauwels E."/>
            <person name="Peelman F."/>
            <person name="Savvides S.N."/>
        </authorList>
    </citation>
    <scope>X-RAY CRYSTALLOGRAPHY (1.9 ANGSTROMS) OF 20-222 IN COMPLEX WITH IL7R AND TSLP</scope>
    <scope>SUBUNIT</scope>
    <scope>DISULFIDE BONDS</scope>
    <scope>GLYCOSYLATION AT ASN-53</scope>
</reference>
<protein>
    <recommendedName>
        <fullName>Cytokine receptor-like factor 2</fullName>
    </recommendedName>
    <alternativeName>
        <fullName>Cytokine receptor-like molecule 2</fullName>
        <shortName>CRLM-2</shortName>
    </alternativeName>
    <alternativeName>
        <fullName>Thymic stromal lymphopoietin protein receptor</fullName>
        <shortName>TSLP receptor</shortName>
    </alternativeName>
    <alternativeName>
        <fullName>Type I cytokine receptor delta 1</fullName>
    </alternativeName>
</protein>
<organism>
    <name type="scientific">Mus musculus</name>
    <name type="common">Mouse</name>
    <dbReference type="NCBI Taxonomy" id="10090"/>
    <lineage>
        <taxon>Eukaryota</taxon>
        <taxon>Metazoa</taxon>
        <taxon>Chordata</taxon>
        <taxon>Craniata</taxon>
        <taxon>Vertebrata</taxon>
        <taxon>Euteleostomi</taxon>
        <taxon>Mammalia</taxon>
        <taxon>Eutheria</taxon>
        <taxon>Euarchontoglires</taxon>
        <taxon>Glires</taxon>
        <taxon>Rodentia</taxon>
        <taxon>Myomorpha</taxon>
        <taxon>Muroidea</taxon>
        <taxon>Muridae</taxon>
        <taxon>Murinae</taxon>
        <taxon>Mus</taxon>
        <taxon>Mus</taxon>
    </lineage>
</organism>
<dbReference type="EMBL" id="AB039945">
    <property type="protein sequence ID" value="BAA92684.1"/>
    <property type="molecule type" value="mRNA"/>
</dbReference>
<dbReference type="EMBL" id="AB031333">
    <property type="protein sequence ID" value="BAA92159.1"/>
    <property type="molecule type" value="mRNA"/>
</dbReference>
<dbReference type="EMBL" id="AF232936">
    <property type="protein sequence ID" value="AAF81676.1"/>
    <property type="molecule type" value="mRNA"/>
</dbReference>
<dbReference type="EMBL" id="AF201963">
    <property type="protein sequence ID" value="AAF82189.1"/>
    <property type="molecule type" value="mRNA"/>
</dbReference>
<dbReference type="EMBL" id="AK010291">
    <property type="protein sequence ID" value="BAB26827.2"/>
    <property type="molecule type" value="mRNA"/>
</dbReference>
<dbReference type="EMBL" id="BC023788">
    <property type="protein sequence ID" value="AAH23788.1"/>
    <property type="molecule type" value="mRNA"/>
</dbReference>
<dbReference type="CCDS" id="CCDS19521.1">
    <molecule id="Q8CII9-1"/>
</dbReference>
<dbReference type="PIR" id="JC7280">
    <property type="entry name" value="JC7280"/>
</dbReference>
<dbReference type="RefSeq" id="NP_001158207.1">
    <property type="nucleotide sequence ID" value="NM_001164735.1"/>
</dbReference>
<dbReference type="RefSeq" id="NP_057924.3">
    <property type="nucleotide sequence ID" value="NM_016715.4"/>
</dbReference>
<dbReference type="PDB" id="4NN5">
    <property type="method" value="X-ray"/>
    <property type="resolution" value="1.90 A"/>
    <property type="chains" value="C=20-222"/>
</dbReference>
<dbReference type="PDB" id="4NN6">
    <property type="method" value="X-ray"/>
    <property type="resolution" value="2.54 A"/>
    <property type="chains" value="C=20-222"/>
</dbReference>
<dbReference type="PDB" id="4NN7">
    <property type="method" value="X-ray"/>
    <property type="resolution" value="3.78 A"/>
    <property type="chains" value="C=20-222"/>
</dbReference>
<dbReference type="PDBsum" id="4NN5"/>
<dbReference type="PDBsum" id="4NN6"/>
<dbReference type="PDBsum" id="4NN7"/>
<dbReference type="SMR" id="Q8CII9"/>
<dbReference type="BioGRID" id="208364">
    <property type="interactions" value="1"/>
</dbReference>
<dbReference type="CORUM" id="Q8CII9"/>
<dbReference type="DIP" id="DIP-59471N"/>
<dbReference type="FunCoup" id="Q8CII9">
    <property type="interactions" value="438"/>
</dbReference>
<dbReference type="IntAct" id="Q8CII9">
    <property type="interactions" value="3"/>
</dbReference>
<dbReference type="STRING" id="10090.ENSMUSP00000036326"/>
<dbReference type="GlyCosmos" id="Q8CII9">
    <property type="glycosylation" value="2 sites, No reported glycans"/>
</dbReference>
<dbReference type="GlyGen" id="Q8CII9">
    <property type="glycosylation" value="2 sites"/>
</dbReference>
<dbReference type="iPTMnet" id="Q8CII9"/>
<dbReference type="PhosphoSitePlus" id="Q8CII9"/>
<dbReference type="PaxDb" id="10090-ENSMUSP00000036326"/>
<dbReference type="ProteomicsDB" id="284018">
    <molecule id="Q8CII9-1"/>
</dbReference>
<dbReference type="ProteomicsDB" id="284019">
    <molecule id="Q8CII9-2"/>
</dbReference>
<dbReference type="ProteomicsDB" id="284020">
    <molecule id="Q8CII9-3"/>
</dbReference>
<dbReference type="ProteomicsDB" id="284021">
    <molecule id="Q8CII9-4"/>
</dbReference>
<dbReference type="DNASU" id="57914"/>
<dbReference type="GeneID" id="57914"/>
<dbReference type="KEGG" id="mmu:57914"/>
<dbReference type="UCSC" id="uc008ypg.2">
    <molecule id="Q8CII9-1"/>
    <property type="organism name" value="mouse"/>
</dbReference>
<dbReference type="AGR" id="MGI:1889506"/>
<dbReference type="CTD" id="64109"/>
<dbReference type="MGI" id="MGI:1889506">
    <property type="gene designation" value="Crlf2"/>
</dbReference>
<dbReference type="eggNOG" id="ENOG502RYG2">
    <property type="taxonomic scope" value="Eukaryota"/>
</dbReference>
<dbReference type="InParanoid" id="Q8CII9"/>
<dbReference type="OrthoDB" id="8803253at2759"/>
<dbReference type="PhylomeDB" id="Q8CII9"/>
<dbReference type="TreeFam" id="TF342693"/>
<dbReference type="BioGRID-ORCS" id="57914">
    <property type="hits" value="0 hits in 78 CRISPR screens"/>
</dbReference>
<dbReference type="EvolutionaryTrace" id="Q8CII9"/>
<dbReference type="PRO" id="PR:Q8CII9"/>
<dbReference type="Proteomes" id="UP000000589">
    <property type="component" value="Unplaced"/>
</dbReference>
<dbReference type="RNAct" id="Q8CII9">
    <property type="molecule type" value="protein"/>
</dbReference>
<dbReference type="GO" id="GO:0009897">
    <property type="term" value="C:external side of plasma membrane"/>
    <property type="evidence" value="ECO:0000314"/>
    <property type="project" value="MGI"/>
</dbReference>
<dbReference type="GO" id="GO:0005576">
    <property type="term" value="C:extracellular region"/>
    <property type="evidence" value="ECO:0007669"/>
    <property type="project" value="UniProtKB-SubCell"/>
</dbReference>
<dbReference type="GO" id="GO:0006954">
    <property type="term" value="P:inflammatory response"/>
    <property type="evidence" value="ECO:0000315"/>
    <property type="project" value="MGI"/>
</dbReference>
<dbReference type="CDD" id="cd00063">
    <property type="entry name" value="FN3"/>
    <property type="match status" value="1"/>
</dbReference>
<dbReference type="FunFam" id="2.60.40.10:FF:001547">
    <property type="entry name" value="Cytokine receptor-like factor 2"/>
    <property type="match status" value="1"/>
</dbReference>
<dbReference type="FunFam" id="2.60.40.10:FF:003028">
    <property type="entry name" value="Cytokine receptor-like factor 2"/>
    <property type="match status" value="1"/>
</dbReference>
<dbReference type="Gene3D" id="2.60.40.10">
    <property type="entry name" value="Immunoglobulins"/>
    <property type="match status" value="2"/>
</dbReference>
<dbReference type="InterPro" id="IPR048648">
    <property type="entry name" value="CRLF2-like_D2"/>
</dbReference>
<dbReference type="InterPro" id="IPR003961">
    <property type="entry name" value="FN3_dom"/>
</dbReference>
<dbReference type="InterPro" id="IPR036116">
    <property type="entry name" value="FN3_sf"/>
</dbReference>
<dbReference type="InterPro" id="IPR013783">
    <property type="entry name" value="Ig-like_fold"/>
</dbReference>
<dbReference type="InterPro" id="IPR053856">
    <property type="entry name" value="TSLPR_D1"/>
</dbReference>
<dbReference type="PANTHER" id="PTHR23037">
    <property type="entry name" value="CYTOKINE RECEPTOR"/>
    <property type="match status" value="1"/>
</dbReference>
<dbReference type="PANTHER" id="PTHR23037:SF35">
    <property type="entry name" value="FIBRONECTIN TYPE-III DOMAIN-CONTAINING PROTEIN"/>
    <property type="match status" value="1"/>
</dbReference>
<dbReference type="Pfam" id="PF21605">
    <property type="entry name" value="CRLF2-like_D2"/>
    <property type="match status" value="1"/>
</dbReference>
<dbReference type="Pfam" id="PF22012">
    <property type="entry name" value="TSLPR_D1"/>
    <property type="match status" value="1"/>
</dbReference>
<dbReference type="SMART" id="SM00060">
    <property type="entry name" value="FN3"/>
    <property type="match status" value="1"/>
</dbReference>
<dbReference type="SUPFAM" id="SSF49265">
    <property type="entry name" value="Fibronectin type III"/>
    <property type="match status" value="2"/>
</dbReference>
<dbReference type="PROSITE" id="PS50853">
    <property type="entry name" value="FN3"/>
    <property type="match status" value="1"/>
</dbReference>